<name>DXS_SHEDO</name>
<keyword id="KW-0414">Isoprene biosynthesis</keyword>
<keyword id="KW-0460">Magnesium</keyword>
<keyword id="KW-0479">Metal-binding</keyword>
<keyword id="KW-1185">Reference proteome</keyword>
<keyword id="KW-0784">Thiamine biosynthesis</keyword>
<keyword id="KW-0786">Thiamine pyrophosphate</keyword>
<keyword id="KW-0808">Transferase</keyword>
<protein>
    <recommendedName>
        <fullName evidence="1">1-deoxy-D-xylulose-5-phosphate synthase</fullName>
        <ecNumber evidence="1">2.2.1.7</ecNumber>
    </recommendedName>
    <alternativeName>
        <fullName evidence="1">1-deoxyxylulose-5-phosphate synthase</fullName>
        <shortName evidence="1">DXP synthase</shortName>
        <shortName evidence="1">DXPS</shortName>
    </alternativeName>
</protein>
<organism>
    <name type="scientific">Shewanella denitrificans (strain OS217 / ATCC BAA-1090 / DSM 15013)</name>
    <dbReference type="NCBI Taxonomy" id="318161"/>
    <lineage>
        <taxon>Bacteria</taxon>
        <taxon>Pseudomonadati</taxon>
        <taxon>Pseudomonadota</taxon>
        <taxon>Gammaproteobacteria</taxon>
        <taxon>Alteromonadales</taxon>
        <taxon>Shewanellaceae</taxon>
        <taxon>Shewanella</taxon>
    </lineage>
</organism>
<sequence length="622" mass="68288">MSFDISKFPVLAKANTPEDLRKLPQNMLSQVSTELRQFLLQSVGNSSGHFASGLGTVELTVALHYVYNTPFDRLIWDVGHQAYPHKIMTGRRDEMHTIRQKNGLHPFPWREESEYDTFSVGHSGTSVSAALGMAIAADKEAAGRKVVAVIGDGAMTGGMVFEAMNHAGDLHKDMLVVLNDNEMSISENVGALNNHLAQLMSGRLYTTIREGSKKVLQGMPVIKEMAKRTEEHLKGMVVPGTLFEELGFNYIGPIDGHDVDALVETMRNMRSLKGPQILHIMTKKGRGYEPAEKDPIGWHAVPKFDPDQFKKPATKPGLPTFSQVFGKWLCDVAAQDDKLLAITPAMREGSGMVEFSQRFPEQYFDAAIAEQHAVTLAAGFACEGFKSVVAIYSTFLQRGYDQLIHDVALQRLPVLFAIDRGGIVGADGATHQGAFDLSFMRCIPNLVIMAPADENECRQMLYTGYRYQDGPTAVRYPRGFATGAEQIEQMTALPIGKGRVCRQGKKIAILNFGTTLASALEVAEQLDASVADMRFIKPLDVDLLHTLALEHDVIVTIEENAIMGGAGSGVIEALHKLKICKPVLQIGLPDEFIKHGAPDEIIAELRLDSKGILAQIQEYLSE</sequence>
<reference key="1">
    <citation type="submission" date="2006-03" db="EMBL/GenBank/DDBJ databases">
        <title>Complete sequence of Shewanella denitrificans OS217.</title>
        <authorList>
            <consortium name="US DOE Joint Genome Institute"/>
            <person name="Copeland A."/>
            <person name="Lucas S."/>
            <person name="Lapidus A."/>
            <person name="Barry K."/>
            <person name="Detter J.C."/>
            <person name="Glavina del Rio T."/>
            <person name="Hammon N."/>
            <person name="Israni S."/>
            <person name="Dalin E."/>
            <person name="Tice H."/>
            <person name="Pitluck S."/>
            <person name="Brettin T."/>
            <person name="Bruce D."/>
            <person name="Han C."/>
            <person name="Tapia R."/>
            <person name="Gilna P."/>
            <person name="Kiss H."/>
            <person name="Schmutz J."/>
            <person name="Larimer F."/>
            <person name="Land M."/>
            <person name="Hauser L."/>
            <person name="Kyrpides N."/>
            <person name="Lykidis A."/>
            <person name="Richardson P."/>
        </authorList>
    </citation>
    <scope>NUCLEOTIDE SEQUENCE [LARGE SCALE GENOMIC DNA]</scope>
    <source>
        <strain>OS217 / ATCC BAA-1090 / DSM 15013</strain>
    </source>
</reference>
<accession>Q12L26</accession>
<comment type="function">
    <text evidence="1">Catalyzes the acyloin condensation reaction between C atoms 2 and 3 of pyruvate and glyceraldehyde 3-phosphate to yield 1-deoxy-D-xylulose-5-phosphate (DXP).</text>
</comment>
<comment type="catalytic activity">
    <reaction evidence="1">
        <text>D-glyceraldehyde 3-phosphate + pyruvate + H(+) = 1-deoxy-D-xylulose 5-phosphate + CO2</text>
        <dbReference type="Rhea" id="RHEA:12605"/>
        <dbReference type="ChEBI" id="CHEBI:15361"/>
        <dbReference type="ChEBI" id="CHEBI:15378"/>
        <dbReference type="ChEBI" id="CHEBI:16526"/>
        <dbReference type="ChEBI" id="CHEBI:57792"/>
        <dbReference type="ChEBI" id="CHEBI:59776"/>
        <dbReference type="EC" id="2.2.1.7"/>
    </reaction>
</comment>
<comment type="cofactor">
    <cofactor evidence="1">
        <name>Mg(2+)</name>
        <dbReference type="ChEBI" id="CHEBI:18420"/>
    </cofactor>
    <text evidence="1">Binds 1 Mg(2+) ion per subunit.</text>
</comment>
<comment type="cofactor">
    <cofactor evidence="1">
        <name>thiamine diphosphate</name>
        <dbReference type="ChEBI" id="CHEBI:58937"/>
    </cofactor>
    <text evidence="1">Binds 1 thiamine pyrophosphate per subunit.</text>
</comment>
<comment type="pathway">
    <text evidence="1">Metabolic intermediate biosynthesis; 1-deoxy-D-xylulose 5-phosphate biosynthesis; 1-deoxy-D-xylulose 5-phosphate from D-glyceraldehyde 3-phosphate and pyruvate: step 1/1.</text>
</comment>
<comment type="subunit">
    <text evidence="1">Homodimer.</text>
</comment>
<comment type="similarity">
    <text evidence="1">Belongs to the transketolase family. DXPS subfamily.</text>
</comment>
<dbReference type="EC" id="2.2.1.7" evidence="1"/>
<dbReference type="EMBL" id="CP000302">
    <property type="protein sequence ID" value="ABE55850.1"/>
    <property type="molecule type" value="Genomic_DNA"/>
</dbReference>
<dbReference type="RefSeq" id="WP_011497001.1">
    <property type="nucleotide sequence ID" value="NC_007954.1"/>
</dbReference>
<dbReference type="SMR" id="Q12L26"/>
<dbReference type="STRING" id="318161.Sden_2571"/>
<dbReference type="KEGG" id="sdn:Sden_2571"/>
<dbReference type="eggNOG" id="COG1154">
    <property type="taxonomic scope" value="Bacteria"/>
</dbReference>
<dbReference type="HOGENOM" id="CLU_009227_1_4_6"/>
<dbReference type="OrthoDB" id="9803371at2"/>
<dbReference type="UniPathway" id="UPA00064">
    <property type="reaction ID" value="UER00091"/>
</dbReference>
<dbReference type="Proteomes" id="UP000001982">
    <property type="component" value="Chromosome"/>
</dbReference>
<dbReference type="GO" id="GO:0005829">
    <property type="term" value="C:cytosol"/>
    <property type="evidence" value="ECO:0007669"/>
    <property type="project" value="TreeGrafter"/>
</dbReference>
<dbReference type="GO" id="GO:0008661">
    <property type="term" value="F:1-deoxy-D-xylulose-5-phosphate synthase activity"/>
    <property type="evidence" value="ECO:0007669"/>
    <property type="project" value="UniProtKB-UniRule"/>
</dbReference>
<dbReference type="GO" id="GO:0000287">
    <property type="term" value="F:magnesium ion binding"/>
    <property type="evidence" value="ECO:0007669"/>
    <property type="project" value="UniProtKB-UniRule"/>
</dbReference>
<dbReference type="GO" id="GO:0030976">
    <property type="term" value="F:thiamine pyrophosphate binding"/>
    <property type="evidence" value="ECO:0007669"/>
    <property type="project" value="UniProtKB-UniRule"/>
</dbReference>
<dbReference type="GO" id="GO:0052865">
    <property type="term" value="P:1-deoxy-D-xylulose 5-phosphate biosynthetic process"/>
    <property type="evidence" value="ECO:0007669"/>
    <property type="project" value="UniProtKB-UniPathway"/>
</dbReference>
<dbReference type="GO" id="GO:0019288">
    <property type="term" value="P:isopentenyl diphosphate biosynthetic process, methylerythritol 4-phosphate pathway"/>
    <property type="evidence" value="ECO:0007669"/>
    <property type="project" value="TreeGrafter"/>
</dbReference>
<dbReference type="GO" id="GO:0016114">
    <property type="term" value="P:terpenoid biosynthetic process"/>
    <property type="evidence" value="ECO:0007669"/>
    <property type="project" value="UniProtKB-UniRule"/>
</dbReference>
<dbReference type="GO" id="GO:0009228">
    <property type="term" value="P:thiamine biosynthetic process"/>
    <property type="evidence" value="ECO:0007669"/>
    <property type="project" value="UniProtKB-UniRule"/>
</dbReference>
<dbReference type="CDD" id="cd02007">
    <property type="entry name" value="TPP_DXS"/>
    <property type="match status" value="1"/>
</dbReference>
<dbReference type="CDD" id="cd07033">
    <property type="entry name" value="TPP_PYR_DXS_TK_like"/>
    <property type="match status" value="1"/>
</dbReference>
<dbReference type="FunFam" id="3.40.50.920:FF:000002">
    <property type="entry name" value="1-deoxy-D-xylulose-5-phosphate synthase"/>
    <property type="match status" value="1"/>
</dbReference>
<dbReference type="FunFam" id="3.40.50.970:FF:000005">
    <property type="entry name" value="1-deoxy-D-xylulose-5-phosphate synthase"/>
    <property type="match status" value="1"/>
</dbReference>
<dbReference type="Gene3D" id="3.40.50.920">
    <property type="match status" value="1"/>
</dbReference>
<dbReference type="Gene3D" id="3.40.50.970">
    <property type="match status" value="2"/>
</dbReference>
<dbReference type="HAMAP" id="MF_00315">
    <property type="entry name" value="DXP_synth"/>
    <property type="match status" value="1"/>
</dbReference>
<dbReference type="InterPro" id="IPR005477">
    <property type="entry name" value="Dxylulose-5-P_synthase"/>
</dbReference>
<dbReference type="InterPro" id="IPR029061">
    <property type="entry name" value="THDP-binding"/>
</dbReference>
<dbReference type="InterPro" id="IPR009014">
    <property type="entry name" value="Transketo_C/PFOR_II"/>
</dbReference>
<dbReference type="InterPro" id="IPR005475">
    <property type="entry name" value="Transketolase-like_Pyr-bd"/>
</dbReference>
<dbReference type="InterPro" id="IPR020826">
    <property type="entry name" value="Transketolase_BS"/>
</dbReference>
<dbReference type="InterPro" id="IPR033248">
    <property type="entry name" value="Transketolase_C"/>
</dbReference>
<dbReference type="InterPro" id="IPR049557">
    <property type="entry name" value="Transketolase_CS"/>
</dbReference>
<dbReference type="NCBIfam" id="TIGR00204">
    <property type="entry name" value="dxs"/>
    <property type="match status" value="1"/>
</dbReference>
<dbReference type="NCBIfam" id="NF003933">
    <property type="entry name" value="PRK05444.2-2"/>
    <property type="match status" value="1"/>
</dbReference>
<dbReference type="PANTHER" id="PTHR43322">
    <property type="entry name" value="1-D-DEOXYXYLULOSE 5-PHOSPHATE SYNTHASE-RELATED"/>
    <property type="match status" value="1"/>
</dbReference>
<dbReference type="PANTHER" id="PTHR43322:SF5">
    <property type="entry name" value="1-DEOXY-D-XYLULOSE-5-PHOSPHATE SYNTHASE, CHLOROPLASTIC"/>
    <property type="match status" value="1"/>
</dbReference>
<dbReference type="Pfam" id="PF13292">
    <property type="entry name" value="DXP_synthase_N"/>
    <property type="match status" value="1"/>
</dbReference>
<dbReference type="Pfam" id="PF02779">
    <property type="entry name" value="Transket_pyr"/>
    <property type="match status" value="1"/>
</dbReference>
<dbReference type="Pfam" id="PF02780">
    <property type="entry name" value="Transketolase_C"/>
    <property type="match status" value="1"/>
</dbReference>
<dbReference type="SMART" id="SM00861">
    <property type="entry name" value="Transket_pyr"/>
    <property type="match status" value="1"/>
</dbReference>
<dbReference type="SUPFAM" id="SSF52518">
    <property type="entry name" value="Thiamin diphosphate-binding fold (THDP-binding)"/>
    <property type="match status" value="2"/>
</dbReference>
<dbReference type="SUPFAM" id="SSF52922">
    <property type="entry name" value="TK C-terminal domain-like"/>
    <property type="match status" value="1"/>
</dbReference>
<dbReference type="PROSITE" id="PS00801">
    <property type="entry name" value="TRANSKETOLASE_1"/>
    <property type="match status" value="1"/>
</dbReference>
<dbReference type="PROSITE" id="PS00802">
    <property type="entry name" value="TRANSKETOLASE_2"/>
    <property type="match status" value="1"/>
</dbReference>
<gene>
    <name evidence="1" type="primary">dxs</name>
    <name type="ordered locus">Sden_2571</name>
</gene>
<evidence type="ECO:0000255" key="1">
    <source>
        <dbReference type="HAMAP-Rule" id="MF_00315"/>
    </source>
</evidence>
<feature type="chain" id="PRO_1000019075" description="1-deoxy-D-xylulose-5-phosphate synthase">
    <location>
        <begin position="1"/>
        <end position="622"/>
    </location>
</feature>
<feature type="binding site" evidence="1">
    <location>
        <position position="80"/>
    </location>
    <ligand>
        <name>thiamine diphosphate</name>
        <dbReference type="ChEBI" id="CHEBI:58937"/>
    </ligand>
</feature>
<feature type="binding site" evidence="1">
    <location>
        <begin position="121"/>
        <end position="123"/>
    </location>
    <ligand>
        <name>thiamine diphosphate</name>
        <dbReference type="ChEBI" id="CHEBI:58937"/>
    </ligand>
</feature>
<feature type="binding site" evidence="1">
    <location>
        <position position="152"/>
    </location>
    <ligand>
        <name>Mg(2+)</name>
        <dbReference type="ChEBI" id="CHEBI:18420"/>
    </ligand>
</feature>
<feature type="binding site" evidence="1">
    <location>
        <begin position="153"/>
        <end position="154"/>
    </location>
    <ligand>
        <name>thiamine diphosphate</name>
        <dbReference type="ChEBI" id="CHEBI:58937"/>
    </ligand>
</feature>
<feature type="binding site" evidence="1">
    <location>
        <position position="181"/>
    </location>
    <ligand>
        <name>Mg(2+)</name>
        <dbReference type="ChEBI" id="CHEBI:18420"/>
    </ligand>
</feature>
<feature type="binding site" evidence="1">
    <location>
        <position position="181"/>
    </location>
    <ligand>
        <name>thiamine diphosphate</name>
        <dbReference type="ChEBI" id="CHEBI:58937"/>
    </ligand>
</feature>
<feature type="binding site" evidence="1">
    <location>
        <position position="288"/>
    </location>
    <ligand>
        <name>thiamine diphosphate</name>
        <dbReference type="ChEBI" id="CHEBI:58937"/>
    </ligand>
</feature>
<feature type="binding site" evidence="1">
    <location>
        <position position="370"/>
    </location>
    <ligand>
        <name>thiamine diphosphate</name>
        <dbReference type="ChEBI" id="CHEBI:58937"/>
    </ligand>
</feature>
<proteinExistence type="inferred from homology"/>